<proteinExistence type="inferred from homology"/>
<gene>
    <name evidence="1" type="primary">proB</name>
    <name type="ordered locus">MAE_21650</name>
</gene>
<organism>
    <name type="scientific">Microcystis aeruginosa (strain NIES-843 / IAM M-2473)</name>
    <dbReference type="NCBI Taxonomy" id="449447"/>
    <lineage>
        <taxon>Bacteria</taxon>
        <taxon>Bacillati</taxon>
        <taxon>Cyanobacteriota</taxon>
        <taxon>Cyanophyceae</taxon>
        <taxon>Oscillatoriophycideae</taxon>
        <taxon>Chroococcales</taxon>
        <taxon>Microcystaceae</taxon>
        <taxon>Microcystis</taxon>
    </lineage>
</organism>
<sequence length="379" mass="40526">MNQTIVIKIGTSSLTDNETGQLSLSTIAALVEVLTRLRAAGHRVVLVSSGAVGVGCRRLGIQERPKKIALKQAIAAVGQGRLMRIYDDLFTSLGQPIAQILLTRPELMERTCYVNAYNTFQALFELGVIAIVNENDTVAIDELKFGDNDTLSALVASLIEADWLFILTDVDRLYSADPRLFPEAAAIARVSPAELAQLSIDAGSSGSQWGTGGMATKLAAARIATSAGVEMAITRGRQPGNILKIMAGEAIGTRFEAQKRSDNARKRWIAYGLLPMGKIYLDAGAIQAICQGGKSLLAAGITKVEGEFSASESVQLCDQEGRELARGIVNYSSEEIDRVKGQHSERIASLLGYMAAETIIHRDNLVILSASSTTSTNKG</sequence>
<comment type="function">
    <text evidence="1">Catalyzes the transfer of a phosphate group to glutamate to form L-glutamate 5-phosphate.</text>
</comment>
<comment type="catalytic activity">
    <reaction evidence="1">
        <text>L-glutamate + ATP = L-glutamyl 5-phosphate + ADP</text>
        <dbReference type="Rhea" id="RHEA:14877"/>
        <dbReference type="ChEBI" id="CHEBI:29985"/>
        <dbReference type="ChEBI" id="CHEBI:30616"/>
        <dbReference type="ChEBI" id="CHEBI:58274"/>
        <dbReference type="ChEBI" id="CHEBI:456216"/>
        <dbReference type="EC" id="2.7.2.11"/>
    </reaction>
</comment>
<comment type="pathway">
    <text evidence="1">Amino-acid biosynthesis; L-proline biosynthesis; L-glutamate 5-semialdehyde from L-glutamate: step 1/2.</text>
</comment>
<comment type="subcellular location">
    <subcellularLocation>
        <location evidence="1">Cytoplasm</location>
    </subcellularLocation>
</comment>
<comment type="similarity">
    <text evidence="1">Belongs to the glutamate 5-kinase family.</text>
</comment>
<reference key="1">
    <citation type="journal article" date="2007" name="DNA Res.">
        <title>Complete genomic structure of the bloom-forming toxic cyanobacterium Microcystis aeruginosa NIES-843.</title>
        <authorList>
            <person name="Kaneko T."/>
            <person name="Nakajima N."/>
            <person name="Okamoto S."/>
            <person name="Suzuki I."/>
            <person name="Tanabe Y."/>
            <person name="Tamaoki M."/>
            <person name="Nakamura Y."/>
            <person name="Kasai F."/>
            <person name="Watanabe A."/>
            <person name="Kawashima K."/>
            <person name="Kishida Y."/>
            <person name="Ono A."/>
            <person name="Shimizu Y."/>
            <person name="Takahashi C."/>
            <person name="Minami C."/>
            <person name="Fujishiro T."/>
            <person name="Kohara M."/>
            <person name="Katoh M."/>
            <person name="Nakazaki N."/>
            <person name="Nakayama S."/>
            <person name="Yamada M."/>
            <person name="Tabata S."/>
            <person name="Watanabe M.M."/>
        </authorList>
    </citation>
    <scope>NUCLEOTIDE SEQUENCE [LARGE SCALE GENOMIC DNA]</scope>
    <source>
        <strain>NIES-843 / IAM M-247</strain>
    </source>
</reference>
<keyword id="KW-0028">Amino-acid biosynthesis</keyword>
<keyword id="KW-0067">ATP-binding</keyword>
<keyword id="KW-0963">Cytoplasm</keyword>
<keyword id="KW-0418">Kinase</keyword>
<keyword id="KW-0547">Nucleotide-binding</keyword>
<keyword id="KW-0641">Proline biosynthesis</keyword>
<keyword id="KW-0808">Transferase</keyword>
<name>PROB_MICAN</name>
<protein>
    <recommendedName>
        <fullName evidence="1">Glutamate 5-kinase</fullName>
        <ecNumber evidence="1">2.7.2.11</ecNumber>
    </recommendedName>
    <alternativeName>
        <fullName evidence="1">Gamma-glutamyl kinase</fullName>
        <shortName evidence="1">GK</shortName>
    </alternativeName>
</protein>
<feature type="chain" id="PRO_1000081072" description="Glutamate 5-kinase">
    <location>
        <begin position="1"/>
        <end position="379"/>
    </location>
</feature>
<feature type="domain" description="PUA" evidence="1">
    <location>
        <begin position="276"/>
        <end position="354"/>
    </location>
</feature>
<feature type="binding site" evidence="1">
    <location>
        <position position="8"/>
    </location>
    <ligand>
        <name>ATP</name>
        <dbReference type="ChEBI" id="CHEBI:30616"/>
    </ligand>
</feature>
<feature type="binding site" evidence="1">
    <location>
        <position position="49"/>
    </location>
    <ligand>
        <name>substrate</name>
    </ligand>
</feature>
<feature type="binding site" evidence="1">
    <location>
        <position position="136"/>
    </location>
    <ligand>
        <name>substrate</name>
    </ligand>
</feature>
<feature type="binding site" evidence="1">
    <location>
        <position position="148"/>
    </location>
    <ligand>
        <name>substrate</name>
    </ligand>
</feature>
<feature type="binding site" evidence="1">
    <location>
        <begin position="168"/>
        <end position="169"/>
    </location>
    <ligand>
        <name>ATP</name>
        <dbReference type="ChEBI" id="CHEBI:30616"/>
    </ligand>
</feature>
<feature type="binding site" evidence="1">
    <location>
        <begin position="211"/>
        <end position="217"/>
    </location>
    <ligand>
        <name>ATP</name>
        <dbReference type="ChEBI" id="CHEBI:30616"/>
    </ligand>
</feature>
<dbReference type="EC" id="2.7.2.11" evidence="1"/>
<dbReference type="EMBL" id="AP009552">
    <property type="protein sequence ID" value="BAG01987.1"/>
    <property type="molecule type" value="Genomic_DNA"/>
</dbReference>
<dbReference type="RefSeq" id="WP_012265373.1">
    <property type="nucleotide sequence ID" value="NC_010296.1"/>
</dbReference>
<dbReference type="SMR" id="B0JFY2"/>
<dbReference type="STRING" id="449447.MAE_21650"/>
<dbReference type="PaxDb" id="449447-MAE_21650"/>
<dbReference type="EnsemblBacteria" id="BAG01987">
    <property type="protein sequence ID" value="BAG01987"/>
    <property type="gene ID" value="MAE_21650"/>
</dbReference>
<dbReference type="KEGG" id="mar:MAE_21650"/>
<dbReference type="PATRIC" id="fig|449447.4.peg.1979"/>
<dbReference type="eggNOG" id="COG0263">
    <property type="taxonomic scope" value="Bacteria"/>
</dbReference>
<dbReference type="HOGENOM" id="CLU_025400_2_0_3"/>
<dbReference type="BioCyc" id="MAER449447:MAE_RS09440-MONOMER"/>
<dbReference type="UniPathway" id="UPA00098">
    <property type="reaction ID" value="UER00359"/>
</dbReference>
<dbReference type="Proteomes" id="UP000001510">
    <property type="component" value="Chromosome"/>
</dbReference>
<dbReference type="GO" id="GO:0005829">
    <property type="term" value="C:cytosol"/>
    <property type="evidence" value="ECO:0007669"/>
    <property type="project" value="TreeGrafter"/>
</dbReference>
<dbReference type="GO" id="GO:0005524">
    <property type="term" value="F:ATP binding"/>
    <property type="evidence" value="ECO:0007669"/>
    <property type="project" value="UniProtKB-KW"/>
</dbReference>
<dbReference type="GO" id="GO:0004349">
    <property type="term" value="F:glutamate 5-kinase activity"/>
    <property type="evidence" value="ECO:0007669"/>
    <property type="project" value="UniProtKB-UniRule"/>
</dbReference>
<dbReference type="GO" id="GO:0003723">
    <property type="term" value="F:RNA binding"/>
    <property type="evidence" value="ECO:0007669"/>
    <property type="project" value="InterPro"/>
</dbReference>
<dbReference type="GO" id="GO:0055129">
    <property type="term" value="P:L-proline biosynthetic process"/>
    <property type="evidence" value="ECO:0007669"/>
    <property type="project" value="UniProtKB-UniRule"/>
</dbReference>
<dbReference type="CDD" id="cd04242">
    <property type="entry name" value="AAK_G5K_ProB"/>
    <property type="match status" value="1"/>
</dbReference>
<dbReference type="CDD" id="cd21157">
    <property type="entry name" value="PUA_G5K"/>
    <property type="match status" value="1"/>
</dbReference>
<dbReference type="FunFam" id="2.30.130.10:FF:000007">
    <property type="entry name" value="Glutamate 5-kinase"/>
    <property type="match status" value="1"/>
</dbReference>
<dbReference type="FunFam" id="3.40.1160.10:FF:000018">
    <property type="entry name" value="Glutamate 5-kinase"/>
    <property type="match status" value="1"/>
</dbReference>
<dbReference type="Gene3D" id="3.40.1160.10">
    <property type="entry name" value="Acetylglutamate kinase-like"/>
    <property type="match status" value="1"/>
</dbReference>
<dbReference type="Gene3D" id="2.30.130.10">
    <property type="entry name" value="PUA domain"/>
    <property type="match status" value="1"/>
</dbReference>
<dbReference type="HAMAP" id="MF_00456">
    <property type="entry name" value="ProB"/>
    <property type="match status" value="1"/>
</dbReference>
<dbReference type="InterPro" id="IPR036393">
    <property type="entry name" value="AceGlu_kinase-like_sf"/>
</dbReference>
<dbReference type="InterPro" id="IPR001048">
    <property type="entry name" value="Asp/Glu/Uridylate_kinase"/>
</dbReference>
<dbReference type="InterPro" id="IPR041739">
    <property type="entry name" value="G5K_ProB"/>
</dbReference>
<dbReference type="InterPro" id="IPR001057">
    <property type="entry name" value="Glu/AcGlu_kinase"/>
</dbReference>
<dbReference type="InterPro" id="IPR011529">
    <property type="entry name" value="Glu_5kinase"/>
</dbReference>
<dbReference type="InterPro" id="IPR005715">
    <property type="entry name" value="Glu_5kinase/COase_Synthase"/>
</dbReference>
<dbReference type="InterPro" id="IPR019797">
    <property type="entry name" value="Glutamate_5-kinase_CS"/>
</dbReference>
<dbReference type="InterPro" id="IPR002478">
    <property type="entry name" value="PUA"/>
</dbReference>
<dbReference type="InterPro" id="IPR015947">
    <property type="entry name" value="PUA-like_sf"/>
</dbReference>
<dbReference type="InterPro" id="IPR036974">
    <property type="entry name" value="PUA_sf"/>
</dbReference>
<dbReference type="NCBIfam" id="TIGR01027">
    <property type="entry name" value="proB"/>
    <property type="match status" value="1"/>
</dbReference>
<dbReference type="PANTHER" id="PTHR43654">
    <property type="entry name" value="GLUTAMATE 5-KINASE"/>
    <property type="match status" value="1"/>
</dbReference>
<dbReference type="PANTHER" id="PTHR43654:SF3">
    <property type="entry name" value="GLUTAMATE 5-KINASE"/>
    <property type="match status" value="1"/>
</dbReference>
<dbReference type="Pfam" id="PF00696">
    <property type="entry name" value="AA_kinase"/>
    <property type="match status" value="1"/>
</dbReference>
<dbReference type="Pfam" id="PF01472">
    <property type="entry name" value="PUA"/>
    <property type="match status" value="1"/>
</dbReference>
<dbReference type="PIRSF" id="PIRSF000729">
    <property type="entry name" value="GK"/>
    <property type="match status" value="1"/>
</dbReference>
<dbReference type="PRINTS" id="PR00474">
    <property type="entry name" value="GLU5KINASE"/>
</dbReference>
<dbReference type="SMART" id="SM00359">
    <property type="entry name" value="PUA"/>
    <property type="match status" value="1"/>
</dbReference>
<dbReference type="SUPFAM" id="SSF53633">
    <property type="entry name" value="Carbamate kinase-like"/>
    <property type="match status" value="1"/>
</dbReference>
<dbReference type="SUPFAM" id="SSF88697">
    <property type="entry name" value="PUA domain-like"/>
    <property type="match status" value="1"/>
</dbReference>
<dbReference type="PROSITE" id="PS00902">
    <property type="entry name" value="GLUTAMATE_5_KINASE"/>
    <property type="match status" value="1"/>
</dbReference>
<dbReference type="PROSITE" id="PS50890">
    <property type="entry name" value="PUA"/>
    <property type="match status" value="1"/>
</dbReference>
<accession>B0JFY2</accession>
<evidence type="ECO:0000255" key="1">
    <source>
        <dbReference type="HAMAP-Rule" id="MF_00456"/>
    </source>
</evidence>